<comment type="function">
    <text evidence="3 4">Antitoxin component of the hybrid type II/IV toxin-antitoxin (TA) system DarTG, which plays a crucial role in controlling bacterial growth and bacteriophage infection. De-ADP-ribosylates DNA modified on thymidine by its cognate toxin DarT, which neutralizes the activity of cognate toxin DarT. Upon expression in E.coli neutralizes the effect of cognate toxin DarT (PubMed:27939941). Upon expression in M.tuberculosis neutralizes the toxic effects of endogenous DarT (PubMed:32634279).</text>
</comment>
<comment type="catalytic activity">
    <reaction>
        <text>an N-(ADP-alpha-D-ribosyl)-thymidine in DNA + H2O = a thymidine in DNA + ADP-D-ribose</text>
        <dbReference type="Rhea" id="RHEA:71655"/>
        <dbReference type="Rhea" id="RHEA-COMP:13556"/>
        <dbReference type="Rhea" id="RHEA-COMP:18051"/>
        <dbReference type="ChEBI" id="CHEBI:15377"/>
        <dbReference type="ChEBI" id="CHEBI:57967"/>
        <dbReference type="ChEBI" id="CHEBI:137386"/>
        <dbReference type="ChEBI" id="CHEBI:191199"/>
    </reaction>
    <physiologicalReaction direction="left-to-right" evidence="3">
        <dbReference type="Rhea" id="RHEA:71656"/>
    </physiologicalReaction>
</comment>
<comment type="subunit">
    <text evidence="1">Interacts (via C-terminus) with cognate toxin DarT; this heterodimeric complex neutralizes the toxic effect of DarT by preventing ssDNA binding to DarT and consequently inactivating the toxin by direct protein-protein interactions.</text>
</comment>
<comment type="domain">
    <text evidence="1 3">The macro domain alone is able to de-ADP-ribosylate substrate in vitro and is almost as effective at neutralizing DarT in growth experiments as full-length protein (PubMed:27939941). The C-terminus is a region interacting with the DarT toxin ssDNA binding region (By similarity).</text>
</comment>
<comment type="similarity">
    <text evidence="7">Belongs to the DarG ADP-ribosyl glycohydrolase family.</text>
</comment>
<sequence>MLRFVRGNLLEAPVEALVNTVNTVGVMGKGVALQFKRAFPDNYQAYVKACERGQVQIGRIFVYDRGPLAQPRYIFNFPTKKHWRHPSRMEYVEEGLKDLVCRIQELRVRSIALPPLGAGNGGLPWPEVKQRIQEALEALEGVEVWVYEPVENPKAHSIVPLKTKPRLTPARAALLKLFGLYGALGEPLGRLEAQKLAYFLQEAGLDLKLDFACKQFGPYAEPLNHVLARLEGHYIQGFGDRTGISQIRLKPQALDEAVLFLADYPKADEAATRAADWVKGFETPYGLELLATVHWAVRHEGARDWASLQKRLQAWNPRKATFPKTHLQVALDALLKRGALRPEEWQDRPPKLPANVAQEA</sequence>
<gene>
    <name evidence="6" type="primary">darG</name>
    <name evidence="9" type="ORF">TO73_1569</name>
</gene>
<organism>
    <name type="scientific">Thermus aquaticus (strain ATCC BAA-2747 / Y51MC23)</name>
    <dbReference type="NCBI Taxonomy" id="498848"/>
    <lineage>
        <taxon>Bacteria</taxon>
        <taxon>Thermotogati</taxon>
        <taxon>Deinococcota</taxon>
        <taxon>Deinococci</taxon>
        <taxon>Thermales</taxon>
        <taxon>Thermaceae</taxon>
        <taxon>Thermus</taxon>
    </lineage>
</organism>
<evidence type="ECO:0000250" key="1">
    <source>
        <dbReference type="UniProtKB" id="O53605"/>
    </source>
</evidence>
<evidence type="ECO:0000255" key="2">
    <source>
        <dbReference type="PROSITE-ProRule" id="PRU00490"/>
    </source>
</evidence>
<evidence type="ECO:0000269" key="3">
    <source>
    </source>
</evidence>
<evidence type="ECO:0000269" key="4">
    <source>
    </source>
</evidence>
<evidence type="ECO:0000269" key="5">
    <source>
    </source>
</evidence>
<evidence type="ECO:0000303" key="6">
    <source>
    </source>
</evidence>
<evidence type="ECO:0000305" key="7"/>
<evidence type="ECO:0000305" key="8">
    <source>
    </source>
</evidence>
<evidence type="ECO:0000312" key="9">
    <source>
        <dbReference type="EMBL" id="ALJ91410.1"/>
    </source>
</evidence>
<evidence type="ECO:0007744" key="10">
    <source>
        <dbReference type="PDB" id="5M31"/>
    </source>
</evidence>
<evidence type="ECO:0007744" key="11">
    <source>
        <dbReference type="PDB" id="5M3E"/>
    </source>
</evidence>
<evidence type="ECO:0007829" key="12">
    <source>
        <dbReference type="PDB" id="5M31"/>
    </source>
</evidence>
<protein>
    <recommendedName>
        <fullName evidence="6">DNA ADP-ribosyl glycohydrolase</fullName>
        <shortName evidence="6">DarG</shortName>
        <ecNumber evidence="3">3.2.2.-</ecNumber>
    </recommendedName>
    <alternativeName>
        <fullName evidence="6">Antitoxin DarG</fullName>
    </alternativeName>
</protein>
<dbReference type="EC" id="3.2.2.-" evidence="3"/>
<dbReference type="EMBL" id="CP010822">
    <property type="protein sequence ID" value="ALJ91410.1"/>
    <property type="molecule type" value="Genomic_DNA"/>
</dbReference>
<dbReference type="RefSeq" id="WP_003046167.1">
    <property type="nucleotide sequence ID" value="NZ_CP010822.1"/>
</dbReference>
<dbReference type="PDB" id="5M31">
    <property type="method" value="X-ray"/>
    <property type="resolution" value="1.67 A"/>
    <property type="chains" value="A=1-155"/>
</dbReference>
<dbReference type="PDB" id="5M3E">
    <property type="method" value="X-ray"/>
    <property type="resolution" value="2.50 A"/>
    <property type="chains" value="A=1-155"/>
</dbReference>
<dbReference type="PDBsum" id="5M31"/>
<dbReference type="PDBsum" id="5M3E"/>
<dbReference type="SMR" id="P0DV57"/>
<dbReference type="KEGG" id="taq:TO73_1569"/>
<dbReference type="OrthoDB" id="9780211at2"/>
<dbReference type="GO" id="GO:0016787">
    <property type="term" value="F:hydrolase activity"/>
    <property type="evidence" value="ECO:0007669"/>
    <property type="project" value="UniProtKB-KW"/>
</dbReference>
<dbReference type="GO" id="GO:0140291">
    <property type="term" value="P:peptidyl-glutamate ADP-deribosylation"/>
    <property type="evidence" value="ECO:0007669"/>
    <property type="project" value="TreeGrafter"/>
</dbReference>
<dbReference type="CDD" id="cd02901">
    <property type="entry name" value="Macro_Poa1p-like"/>
    <property type="match status" value="1"/>
</dbReference>
<dbReference type="Gene3D" id="3.40.220.10">
    <property type="entry name" value="Leucine Aminopeptidase, subunit E, domain 1"/>
    <property type="match status" value="1"/>
</dbReference>
<dbReference type="InterPro" id="IPR050892">
    <property type="entry name" value="ADP-ribose_metab_enzymes"/>
</dbReference>
<dbReference type="InterPro" id="IPR002589">
    <property type="entry name" value="Macro_dom"/>
</dbReference>
<dbReference type="InterPro" id="IPR043472">
    <property type="entry name" value="Macro_dom-like"/>
</dbReference>
<dbReference type="PANTHER" id="PTHR12521:SF0">
    <property type="entry name" value="ADP-RIBOSE GLYCOHYDROLASE OARD1"/>
    <property type="match status" value="1"/>
</dbReference>
<dbReference type="PANTHER" id="PTHR12521">
    <property type="entry name" value="PROTEIN C6ORF130"/>
    <property type="match status" value="1"/>
</dbReference>
<dbReference type="Pfam" id="PF01661">
    <property type="entry name" value="Macro"/>
    <property type="match status" value="1"/>
</dbReference>
<dbReference type="SMART" id="SM00506">
    <property type="entry name" value="A1pp"/>
    <property type="match status" value="1"/>
</dbReference>
<dbReference type="SUPFAM" id="SSF52949">
    <property type="entry name" value="Macro domain-like"/>
    <property type="match status" value="1"/>
</dbReference>
<dbReference type="PROSITE" id="PS51154">
    <property type="entry name" value="MACRO"/>
    <property type="match status" value="1"/>
</dbReference>
<reference key="1">
    <citation type="journal article" date="2015" name="PLoS ONE">
        <title>Complete Genome Sequence of Thermus aquaticus Y51MC23.</title>
        <authorList>
            <person name="Brumm P.J."/>
            <person name="Monsma S."/>
            <person name="Keough B."/>
            <person name="Jasinovica S."/>
            <person name="Ferguson E."/>
            <person name="Schoenfeld T."/>
            <person name="Lodes M."/>
            <person name="Mead D.A."/>
        </authorList>
    </citation>
    <scope>NUCLEOTIDE SEQUENCE [LARGE SCALE GENOMIC DNA]</scope>
    <source>
        <strain>BAA-2747 / Y51MC23</strain>
    </source>
</reference>
<reference key="2">
    <citation type="journal article" date="2020" name="Mol. Microbiol.">
        <title>Depletion of the DarG antitoxin in Mycobacterium tuberculosis triggers the DNA-damage response and leads to cell death.</title>
        <authorList>
            <person name="Zaveri A."/>
            <person name="Wang R."/>
            <person name="Botella L."/>
            <person name="Sharma R."/>
            <person name="Zhu L."/>
            <person name="Wallach J.B."/>
            <person name="Song N."/>
            <person name="Jansen R.S."/>
            <person name="Rhee K.Y."/>
            <person name="Ehrt S."/>
            <person name="Schnappinger D."/>
        </authorList>
    </citation>
    <scope>FUNCTION AS AN ANTITOXIN</scope>
    <scope>EXPRESSION IN M.TUBERCULOSIS</scope>
</reference>
<reference key="3">
    <citation type="journal article" date="2021" name="Nature">
        <title>Molecular basis for DarT ADP-ribosylation of a DNA base.</title>
        <authorList>
            <person name="Schuller M."/>
            <person name="Butler R.E."/>
            <person name="Ariza A."/>
            <person name="Tromans-Coia C."/>
            <person name="Jankevicius G."/>
            <person name="Claridge T.D.W."/>
            <person name="Kendall S.L."/>
            <person name="Goh S."/>
            <person name="Stewart G.R."/>
            <person name="Ahel I."/>
        </authorList>
    </citation>
    <scope>FUNCTION AS AN ANTITOXIN</scope>
    <scope>MUTAGENESIS OF ASN-22 AND LYS-80</scope>
</reference>
<reference evidence="10 11" key="4">
    <citation type="journal article" date="2016" name="Mol. Cell">
        <title>The Toxin-Antitoxin System DarTG Catalyzes Reversible ADP-Ribosylation of DNA.</title>
        <authorList>
            <person name="Jankevicius G."/>
            <person name="Ariza A."/>
            <person name="Ahel M."/>
            <person name="Ahel I."/>
        </authorList>
    </citation>
    <scope>X-RAY CRYSTALLOGRAPHY (1.67 ANGSTROMS) OF 1-155 WITH AND WITHOUT ADPR</scope>
    <scope>FUNCTION AS AN ANTITOXIN</scope>
    <scope>FUNCTION AS AN ADP-RIBOSYL GLYCOHYDROLASE</scope>
    <scope>CATALYTIC ACTIVITY</scope>
    <scope>EXPRESSION IN E.COLI</scope>
    <scope>DOMAIN</scope>
    <scope>POSSIBLE ACTIVE SITE</scope>
    <scope>MUTAGENESIS OF ASN-22; LYS-29; LYS-80; HIS-82; TRP-83 AND GLY-119</scope>
</reference>
<accession>P0DV57</accession>
<proteinExistence type="evidence at protein level"/>
<feature type="chain" id="PRO_0000456047" description="DNA ADP-ribosyl glycohydrolase">
    <location>
        <begin position="1"/>
        <end position="360"/>
    </location>
</feature>
<feature type="domain" description="Macro" evidence="2">
    <location>
        <begin position="1"/>
        <end position="155"/>
    </location>
</feature>
<feature type="region of interest" description="Interaction with DarT" evidence="1">
    <location>
        <begin position="167"/>
        <end position="338"/>
    </location>
</feature>
<feature type="active site" description="Nucleophile" evidence="8">
    <location>
        <position position="80"/>
    </location>
</feature>
<feature type="binding site" evidence="3 11">
    <location>
        <begin position="8"/>
        <end position="9"/>
    </location>
    <ligand>
        <name>ADP-D-ribose</name>
        <dbReference type="ChEBI" id="CHEBI:57967"/>
    </ligand>
</feature>
<feature type="binding site" evidence="3 11">
    <location>
        <begin position="20"/>
        <end position="22"/>
    </location>
    <ligand>
        <name>ADP-D-ribose</name>
        <dbReference type="ChEBI" id="CHEBI:57967"/>
    </ligand>
</feature>
<feature type="binding site" evidence="3 11">
    <location>
        <begin position="31"/>
        <end position="34"/>
    </location>
    <ligand>
        <name>ADP-D-ribose</name>
        <dbReference type="ChEBI" id="CHEBI:57967"/>
    </ligand>
</feature>
<feature type="binding site" evidence="3 11">
    <location>
        <position position="79"/>
    </location>
    <ligand>
        <name>ADP-D-ribose</name>
        <dbReference type="ChEBI" id="CHEBI:57967"/>
    </ligand>
</feature>
<feature type="binding site" evidence="3 11">
    <location>
        <begin position="117"/>
        <end position="121"/>
    </location>
    <ligand>
        <name>ADP-D-ribose</name>
        <dbReference type="ChEBI" id="CHEBI:57967"/>
    </ligand>
</feature>
<feature type="mutagenesis site" description="Loss of de-ADP-ribosylation (of macro domain fragment). Macro domain does not neutralize DarT in E.coli, nor have enzyme activity in vitro; when associated with A-80." evidence="3 5">
    <original>N</original>
    <variation>A</variation>
    <location>
        <position position="22"/>
    </location>
</feature>
<feature type="mutagenesis site" description="Reduced de-ADP-ribosylation (of macro domain fragment)." evidence="3">
    <original>K</original>
    <variation>E</variation>
    <location>
        <position position="29"/>
    </location>
</feature>
<feature type="mutagenesis site" description="Loss of de-ADP-ribosylation (of macro domain fragment), whole protein does not neutralize DarT in growth experiments, does decrease activity of DarT slightly in vitro. Does not neutralize M.tuberculosis DarT in vivo. Macro domain does not neutralize DarT in E.coli, nor have enzyme activity in vitro; when associated with A-22." evidence="3 4 5">
    <original>K</original>
    <variation>A</variation>
    <location>
        <position position="80"/>
    </location>
</feature>
<feature type="mutagenesis site" description="Slower than wild-type de-ADP-ribosylation (of macro domain fragment)." evidence="3">
    <original>H</original>
    <variation>A</variation>
    <location>
        <position position="82"/>
    </location>
</feature>
<feature type="mutagenesis site" description="Slower than wild-type de-ADP-ribosylation (of macro domain fragment)." evidence="3">
    <original>W</original>
    <variation>A</variation>
    <location>
        <position position="83"/>
    </location>
</feature>
<feature type="mutagenesis site" description="Greatly reduced de-ADP-ribosylation (of macro domain fragment)." evidence="3">
    <original>G</original>
    <variation>E</variation>
    <location>
        <position position="119"/>
    </location>
</feature>
<feature type="strand" evidence="12">
    <location>
        <begin position="1"/>
        <end position="5"/>
    </location>
</feature>
<feature type="helix" evidence="12">
    <location>
        <begin position="9"/>
        <end position="11"/>
    </location>
</feature>
<feature type="strand" evidence="12">
    <location>
        <begin position="14"/>
        <end position="21"/>
    </location>
</feature>
<feature type="strand" evidence="12">
    <location>
        <begin position="23"/>
        <end position="25"/>
    </location>
</feature>
<feature type="helix" evidence="12">
    <location>
        <begin position="30"/>
        <end position="38"/>
    </location>
</feature>
<feature type="helix" evidence="12">
    <location>
        <begin position="40"/>
        <end position="51"/>
    </location>
</feature>
<feature type="strand" evidence="12">
    <location>
        <begin position="61"/>
        <end position="64"/>
    </location>
</feature>
<feature type="strand" evidence="12">
    <location>
        <begin position="73"/>
        <end position="78"/>
    </location>
</feature>
<feature type="helix" evidence="12">
    <location>
        <begin position="89"/>
        <end position="106"/>
    </location>
</feature>
<feature type="strand" evidence="12">
    <location>
        <begin position="110"/>
        <end position="113"/>
    </location>
</feature>
<feature type="helix" evidence="12">
    <location>
        <begin position="125"/>
        <end position="136"/>
    </location>
</feature>
<feature type="strand" evidence="12">
    <location>
        <begin position="143"/>
        <end position="147"/>
    </location>
</feature>
<name>DARG_THEA5</name>
<keyword id="KW-0002">3D-structure</keyword>
<keyword id="KW-0378">Hydrolase</keyword>
<keyword id="KW-1277">Toxin-antitoxin system</keyword>